<protein>
    <recommendedName>
        <fullName evidence="1">Probable DNA-directed RNA polymerase subunit delta</fullName>
    </recommendedName>
    <alternativeName>
        <fullName evidence="1">RNAP delta factor</fullName>
    </alternativeName>
</protein>
<comment type="function">
    <text evidence="1">Participates in both the initiation and recycling phases of transcription. In the presence of the delta subunit, RNAP displays an increased specificity of transcription, a decreased affinity for nucleic acids, and an increased efficiency of RNA synthesis because of enhanced recycling.</text>
</comment>
<comment type="subunit">
    <text evidence="1">RNAP is composed of a core of 2 alpha, a beta and a beta' subunits. The core is associated with a delta subunit and one of several sigma factors.</text>
</comment>
<comment type="similarity">
    <text evidence="1">Belongs to the RpoE family.</text>
</comment>
<accession>B9DMC7</accession>
<reference key="1">
    <citation type="journal article" date="2009" name="Appl. Environ. Microbiol.">
        <title>Genome analysis of the meat starter culture bacterium Staphylococcus carnosus TM300.</title>
        <authorList>
            <person name="Rosenstein R."/>
            <person name="Nerz C."/>
            <person name="Biswas L."/>
            <person name="Resch A."/>
            <person name="Raddatz G."/>
            <person name="Schuster S.C."/>
            <person name="Goetz F."/>
        </authorList>
    </citation>
    <scope>NUCLEOTIDE SEQUENCE [LARGE SCALE GENOMIC DNA]</scope>
    <source>
        <strain>TM300</strain>
    </source>
</reference>
<evidence type="ECO:0000255" key="1">
    <source>
        <dbReference type="HAMAP-Rule" id="MF_00357"/>
    </source>
</evidence>
<evidence type="ECO:0000255" key="2">
    <source>
        <dbReference type="PROSITE-ProRule" id="PRU01261"/>
    </source>
</evidence>
<evidence type="ECO:0000256" key="3">
    <source>
        <dbReference type="SAM" id="MobiDB-lite"/>
    </source>
</evidence>
<dbReference type="EMBL" id="AM295250">
    <property type="protein sequence ID" value="CAL28537.1"/>
    <property type="molecule type" value="Genomic_DNA"/>
</dbReference>
<dbReference type="RefSeq" id="WP_015900877.1">
    <property type="nucleotide sequence ID" value="NC_012121.1"/>
</dbReference>
<dbReference type="SMR" id="B9DMC7"/>
<dbReference type="GeneID" id="93794085"/>
<dbReference type="KEGG" id="sca:SCA_1631"/>
<dbReference type="eggNOG" id="COG3343">
    <property type="taxonomic scope" value="Bacteria"/>
</dbReference>
<dbReference type="HOGENOM" id="CLU_116648_1_1_9"/>
<dbReference type="OrthoDB" id="401223at2"/>
<dbReference type="BioCyc" id="SCAR396513:SCA_RS08285-MONOMER"/>
<dbReference type="Proteomes" id="UP000000444">
    <property type="component" value="Chromosome"/>
</dbReference>
<dbReference type="GO" id="GO:0000428">
    <property type="term" value="C:DNA-directed RNA polymerase complex"/>
    <property type="evidence" value="ECO:0007669"/>
    <property type="project" value="UniProtKB-KW"/>
</dbReference>
<dbReference type="GO" id="GO:0003899">
    <property type="term" value="F:DNA-directed RNA polymerase activity"/>
    <property type="evidence" value="ECO:0007669"/>
    <property type="project" value="UniProtKB-UniRule"/>
</dbReference>
<dbReference type="GO" id="GO:0006351">
    <property type="term" value="P:DNA-templated transcription"/>
    <property type="evidence" value="ECO:0007669"/>
    <property type="project" value="InterPro"/>
</dbReference>
<dbReference type="GO" id="GO:0006355">
    <property type="term" value="P:regulation of DNA-templated transcription"/>
    <property type="evidence" value="ECO:0007669"/>
    <property type="project" value="UniProtKB-UniRule"/>
</dbReference>
<dbReference type="Gene3D" id="1.10.10.1250">
    <property type="entry name" value="RNA polymerase, subunit delta, N-terminal domain"/>
    <property type="match status" value="1"/>
</dbReference>
<dbReference type="HAMAP" id="MF_00357">
    <property type="entry name" value="RNApol_bact_RpoE"/>
    <property type="match status" value="1"/>
</dbReference>
<dbReference type="InterPro" id="IPR007759">
    <property type="entry name" value="Asxl_HARE-HTH"/>
</dbReference>
<dbReference type="InterPro" id="IPR038087">
    <property type="entry name" value="RNAP_delta_N_dom_sf"/>
</dbReference>
<dbReference type="InterPro" id="IPR029757">
    <property type="entry name" value="RpoE"/>
</dbReference>
<dbReference type="NCBIfam" id="TIGR04567">
    <property type="entry name" value="RNAP_delt_lowGC"/>
    <property type="match status" value="1"/>
</dbReference>
<dbReference type="Pfam" id="PF05066">
    <property type="entry name" value="HARE-HTH"/>
    <property type="match status" value="1"/>
</dbReference>
<dbReference type="PROSITE" id="PS51913">
    <property type="entry name" value="HTH_HARE"/>
    <property type="match status" value="1"/>
</dbReference>
<feature type="chain" id="PRO_1000133448" description="Probable DNA-directed RNA polymerase subunit delta">
    <location>
        <begin position="1"/>
        <end position="184"/>
    </location>
</feature>
<feature type="domain" description="HTH HARE-type" evidence="2">
    <location>
        <begin position="14"/>
        <end position="82"/>
    </location>
</feature>
<feature type="region of interest" description="Disordered" evidence="3">
    <location>
        <begin position="114"/>
        <end position="184"/>
    </location>
</feature>
<feature type="compositionally biased region" description="Acidic residues" evidence="3">
    <location>
        <begin position="117"/>
        <end position="184"/>
    </location>
</feature>
<keyword id="KW-0240">DNA-directed RNA polymerase</keyword>
<keyword id="KW-0548">Nucleotidyltransferase</keyword>
<keyword id="KW-1185">Reference proteome</keyword>
<keyword id="KW-0804">Transcription</keyword>
<keyword id="KW-0808">Transferase</keyword>
<organism>
    <name type="scientific">Staphylococcus carnosus (strain TM300)</name>
    <dbReference type="NCBI Taxonomy" id="396513"/>
    <lineage>
        <taxon>Bacteria</taxon>
        <taxon>Bacillati</taxon>
        <taxon>Bacillota</taxon>
        <taxon>Bacilli</taxon>
        <taxon>Bacillales</taxon>
        <taxon>Staphylococcaceae</taxon>
        <taxon>Staphylococcus</taxon>
    </lineage>
</organism>
<name>RPOE_STACT</name>
<proteinExistence type="inferred from homology"/>
<sequence length="184" mass="21736">MKIQDYTKEMVDEKSFIDMAHTLLEEKGTTMNLYDIIDEFKALGHYEDDEHLENRIVQFYTDLNTDGRFLNVGENNWGLRDWYSVDDIEEKIAPTIQKFDILDEDDEEDKNLKLLGEEEEEIDDQETAEADAEDDDEDLDDPQDEEEINDSDIVIEEDKDEMDEAEQLFEEEEDFNDDPDDDKI</sequence>
<gene>
    <name evidence="1" type="primary">rpoE</name>
    <name type="ordered locus">Sca_1631</name>
</gene>